<keyword id="KW-0963">Cytoplasm</keyword>
<keyword id="KW-0269">Exonuclease</keyword>
<keyword id="KW-0378">Hydrolase</keyword>
<keyword id="KW-0540">Nuclease</keyword>
<reference key="1">
    <citation type="journal article" date="2007" name="J. Bacteriol.">
        <title>The complete genome sequence of the lactic acid bacterial paradigm Lactococcus lactis subsp. cremoris MG1363.</title>
        <authorList>
            <person name="Wegmann U."/>
            <person name="O'Connell-Motherway M."/>
            <person name="Zomer A."/>
            <person name="Buist G."/>
            <person name="Shearman C."/>
            <person name="Canchaya C."/>
            <person name="Ventura M."/>
            <person name="Goesmann A."/>
            <person name="Gasson M.J."/>
            <person name="Kuipers O.P."/>
            <person name="van Sinderen D."/>
            <person name="Kok J."/>
        </authorList>
    </citation>
    <scope>NUCLEOTIDE SEQUENCE [LARGE SCALE GENOMIC DNA]</scope>
    <source>
        <strain>MG1363</strain>
    </source>
</reference>
<dbReference type="EC" id="3.1.11.6" evidence="1"/>
<dbReference type="EMBL" id="AM406671">
    <property type="protein sequence ID" value="CAL98266.1"/>
    <property type="molecule type" value="Genomic_DNA"/>
</dbReference>
<dbReference type="RefSeq" id="WP_011835498.1">
    <property type="nucleotide sequence ID" value="NC_009004.1"/>
</dbReference>
<dbReference type="SMR" id="A2RLU4"/>
<dbReference type="STRING" id="416870.llmg_1692"/>
<dbReference type="KEGG" id="llm:llmg_1692"/>
<dbReference type="eggNOG" id="COG1570">
    <property type="taxonomic scope" value="Bacteria"/>
</dbReference>
<dbReference type="HOGENOM" id="CLU_023625_3_1_9"/>
<dbReference type="OrthoDB" id="9802795at2"/>
<dbReference type="PhylomeDB" id="A2RLU4"/>
<dbReference type="Proteomes" id="UP000000364">
    <property type="component" value="Chromosome"/>
</dbReference>
<dbReference type="GO" id="GO:0005737">
    <property type="term" value="C:cytoplasm"/>
    <property type="evidence" value="ECO:0007669"/>
    <property type="project" value="UniProtKB-SubCell"/>
</dbReference>
<dbReference type="GO" id="GO:0009318">
    <property type="term" value="C:exodeoxyribonuclease VII complex"/>
    <property type="evidence" value="ECO:0007669"/>
    <property type="project" value="InterPro"/>
</dbReference>
<dbReference type="GO" id="GO:0008855">
    <property type="term" value="F:exodeoxyribonuclease VII activity"/>
    <property type="evidence" value="ECO:0007669"/>
    <property type="project" value="UniProtKB-UniRule"/>
</dbReference>
<dbReference type="GO" id="GO:0003676">
    <property type="term" value="F:nucleic acid binding"/>
    <property type="evidence" value="ECO:0007669"/>
    <property type="project" value="InterPro"/>
</dbReference>
<dbReference type="GO" id="GO:0006308">
    <property type="term" value="P:DNA catabolic process"/>
    <property type="evidence" value="ECO:0007669"/>
    <property type="project" value="UniProtKB-UniRule"/>
</dbReference>
<dbReference type="CDD" id="cd04489">
    <property type="entry name" value="ExoVII_LU_OBF"/>
    <property type="match status" value="1"/>
</dbReference>
<dbReference type="HAMAP" id="MF_00378">
    <property type="entry name" value="Exonuc_7_L"/>
    <property type="match status" value="1"/>
</dbReference>
<dbReference type="InterPro" id="IPR003753">
    <property type="entry name" value="Exonuc_VII_L"/>
</dbReference>
<dbReference type="InterPro" id="IPR020579">
    <property type="entry name" value="Exonuc_VII_lsu_C"/>
</dbReference>
<dbReference type="InterPro" id="IPR025824">
    <property type="entry name" value="OB-fold_nuc-bd_dom"/>
</dbReference>
<dbReference type="NCBIfam" id="TIGR00237">
    <property type="entry name" value="xseA"/>
    <property type="match status" value="1"/>
</dbReference>
<dbReference type="PANTHER" id="PTHR30008">
    <property type="entry name" value="EXODEOXYRIBONUCLEASE 7 LARGE SUBUNIT"/>
    <property type="match status" value="1"/>
</dbReference>
<dbReference type="PANTHER" id="PTHR30008:SF0">
    <property type="entry name" value="EXODEOXYRIBONUCLEASE 7 LARGE SUBUNIT"/>
    <property type="match status" value="1"/>
</dbReference>
<dbReference type="Pfam" id="PF02601">
    <property type="entry name" value="Exonuc_VII_L"/>
    <property type="match status" value="1"/>
</dbReference>
<dbReference type="Pfam" id="PF13742">
    <property type="entry name" value="tRNA_anti_2"/>
    <property type="match status" value="1"/>
</dbReference>
<name>EX7L_LACLM</name>
<evidence type="ECO:0000255" key="1">
    <source>
        <dbReference type="HAMAP-Rule" id="MF_00378"/>
    </source>
</evidence>
<organism>
    <name type="scientific">Lactococcus lactis subsp. cremoris (strain MG1363)</name>
    <dbReference type="NCBI Taxonomy" id="416870"/>
    <lineage>
        <taxon>Bacteria</taxon>
        <taxon>Bacillati</taxon>
        <taxon>Bacillota</taxon>
        <taxon>Bacilli</taxon>
        <taxon>Lactobacillales</taxon>
        <taxon>Streptococcaceae</taxon>
        <taxon>Lactococcus</taxon>
        <taxon>Lactococcus cremoris subsp. cremoris</taxon>
    </lineage>
</organism>
<sequence>MTEYLSVSTLTKYLKAKFERDPYLERVYLTGEISNFRRRPNHQYFALKDEGAVIQATMWAGQFRKLDFELEEGMKVLAIGRISIYPPSGSYSINIESLVPDGVGALALKFEQLKKKLAAEGLFDQRWKQNLPQFSKKIAVVTSPSGAVIRDIITTVQRRFPMSQIVLYPTKVQGAGAAEEISGNIRRANERGDFDVMIIGRGGGSIEDLWGFNEEIVVRAIFESRIPIISSVGHETDVTLADFVADSRAATPTAAAELATPNTKIDLINWANEQESRLFNRLTHLIKIRRERLEKLSQSVVFRQPERLYDGHVQKLDRLCERLTVLTENKVANMKHRYELSANRLIPTYSKIVESKKNKTEQLYQSLLLLDISKIKARGFSLITDENGKIIKSVSDVKKGQALDVELTDGQVKVEVK</sequence>
<comment type="function">
    <text evidence="1">Bidirectionally degrades single-stranded DNA into large acid-insoluble oligonucleotides, which are then degraded further into small acid-soluble oligonucleotides.</text>
</comment>
<comment type="catalytic activity">
    <reaction evidence="1">
        <text>Exonucleolytic cleavage in either 5'- to 3'- or 3'- to 5'-direction to yield nucleoside 5'-phosphates.</text>
        <dbReference type="EC" id="3.1.11.6"/>
    </reaction>
</comment>
<comment type="subunit">
    <text evidence="1">Heterooligomer composed of large and small subunits.</text>
</comment>
<comment type="subcellular location">
    <subcellularLocation>
        <location evidence="1">Cytoplasm</location>
    </subcellularLocation>
</comment>
<comment type="similarity">
    <text evidence="1">Belongs to the XseA family.</text>
</comment>
<proteinExistence type="inferred from homology"/>
<feature type="chain" id="PRO_0000303794" description="Exodeoxyribonuclease 7 large subunit">
    <location>
        <begin position="1"/>
        <end position="417"/>
    </location>
</feature>
<protein>
    <recommendedName>
        <fullName evidence="1">Exodeoxyribonuclease 7 large subunit</fullName>
        <ecNumber evidence="1">3.1.11.6</ecNumber>
    </recommendedName>
    <alternativeName>
        <fullName evidence="1">Exodeoxyribonuclease VII large subunit</fullName>
        <shortName evidence="1">Exonuclease VII large subunit</shortName>
    </alternativeName>
</protein>
<gene>
    <name evidence="1" type="primary">xseA</name>
    <name type="ordered locus">llmg_1692</name>
</gene>
<accession>A2RLU4</accession>